<comment type="function">
    <text evidence="1">Involved in protein N-glycosylation. Essential for the second step of the dolichol-linked oligosaccharide pathway. Anchors the catalytic subunit ALG13 to the ER (By similarity).</text>
</comment>
<comment type="subunit">
    <text evidence="1">Heterodimer with ALG13 to form a functional enzyme.</text>
</comment>
<comment type="subcellular location">
    <subcellularLocation>
        <location evidence="2">Endoplasmic reticulum membrane</location>
        <topology evidence="3">Single-pass membrane protein</topology>
    </subcellularLocation>
    <subcellularLocation>
        <location evidence="2">Nucleus membrane</location>
        <topology evidence="3">Single-pass membrane protein</topology>
    </subcellularLocation>
</comment>
<comment type="similarity">
    <text evidence="4">Belongs to the ALG14 family.</text>
</comment>
<name>ALG14_CANAL</name>
<keyword id="KW-0256">Endoplasmic reticulum</keyword>
<keyword id="KW-0472">Membrane</keyword>
<keyword id="KW-0539">Nucleus</keyword>
<keyword id="KW-1185">Reference proteome</keyword>
<keyword id="KW-0812">Transmembrane</keyword>
<keyword id="KW-1133">Transmembrane helix</keyword>
<organism>
    <name type="scientific">Candida albicans (strain SC5314 / ATCC MYA-2876)</name>
    <name type="common">Yeast</name>
    <dbReference type="NCBI Taxonomy" id="237561"/>
    <lineage>
        <taxon>Eukaryota</taxon>
        <taxon>Fungi</taxon>
        <taxon>Dikarya</taxon>
        <taxon>Ascomycota</taxon>
        <taxon>Saccharomycotina</taxon>
        <taxon>Pichiomycetes</taxon>
        <taxon>Debaryomycetaceae</taxon>
        <taxon>Candida/Lodderomyces clade</taxon>
        <taxon>Candida</taxon>
    </lineage>
</organism>
<sequence>MDIETAACFSIAFIATPILIVLVRLLFILPSLRLPTSVKKKKKLIQECQLSILLGSGGHTGEMMRIISKLDMGKVSRTWIYTSGDNASLAKAQDYERKSGTSSQYIPIPRARTVGQSYISSIPTTIYSFLFSAIAMLKHRPAVILLNGPGTCVPVAYILFLYKLLGLCNTKIIYIESLARVNKLSLSGLLLLPISDRFIVQWESLYQQYSRVEYYGILI</sequence>
<feature type="chain" id="PRO_0000123811" description="UDP-N-acetylglucosamine transferase subunit ALG14">
    <location>
        <begin position="1"/>
        <end position="219"/>
    </location>
</feature>
<feature type="topological domain" description="Lumenal" evidence="2">
    <location>
        <begin position="1"/>
        <end position="8"/>
    </location>
</feature>
<feature type="transmembrane region" description="Helical" evidence="3">
    <location>
        <begin position="9"/>
        <end position="29"/>
    </location>
</feature>
<feature type="topological domain" description="Cytoplasmic" evidence="2">
    <location>
        <begin position="30"/>
        <end position="219"/>
    </location>
</feature>
<gene>
    <name type="primary">ALG14</name>
    <name type="ordered locus">CAALFM_C210790CA</name>
    <name type="ORF">CaO19.12823</name>
    <name type="ORF">CaO19.5363</name>
</gene>
<proteinExistence type="inferred from homology"/>
<reference key="1">
    <citation type="journal article" date="2004" name="Proc. Natl. Acad. Sci. U.S.A.">
        <title>The diploid genome sequence of Candida albicans.</title>
        <authorList>
            <person name="Jones T."/>
            <person name="Federspiel N.A."/>
            <person name="Chibana H."/>
            <person name="Dungan J."/>
            <person name="Kalman S."/>
            <person name="Magee B.B."/>
            <person name="Newport G."/>
            <person name="Thorstenson Y.R."/>
            <person name="Agabian N."/>
            <person name="Magee P.T."/>
            <person name="Davis R.W."/>
            <person name="Scherer S."/>
        </authorList>
    </citation>
    <scope>NUCLEOTIDE SEQUENCE [LARGE SCALE GENOMIC DNA]</scope>
    <source>
        <strain>SC5314 / ATCC MYA-2876</strain>
    </source>
</reference>
<reference key="2">
    <citation type="journal article" date="2007" name="Genome Biol.">
        <title>Assembly of the Candida albicans genome into sixteen supercontigs aligned on the eight chromosomes.</title>
        <authorList>
            <person name="van het Hoog M."/>
            <person name="Rast T.J."/>
            <person name="Martchenko M."/>
            <person name="Grindle S."/>
            <person name="Dignard D."/>
            <person name="Hogues H."/>
            <person name="Cuomo C."/>
            <person name="Berriman M."/>
            <person name="Scherer S."/>
            <person name="Magee B.B."/>
            <person name="Whiteway M."/>
            <person name="Chibana H."/>
            <person name="Nantel A."/>
            <person name="Magee P.T."/>
        </authorList>
    </citation>
    <scope>GENOME REANNOTATION</scope>
    <source>
        <strain>SC5314 / ATCC MYA-2876</strain>
    </source>
</reference>
<reference key="3">
    <citation type="journal article" date="2013" name="Genome Biol.">
        <title>Assembly of a phased diploid Candida albicans genome facilitates allele-specific measurements and provides a simple model for repeat and indel structure.</title>
        <authorList>
            <person name="Muzzey D."/>
            <person name="Schwartz K."/>
            <person name="Weissman J.S."/>
            <person name="Sherlock G."/>
        </authorList>
    </citation>
    <scope>NUCLEOTIDE SEQUENCE [LARGE SCALE GENOMIC DNA]</scope>
    <scope>GENOME REANNOTATION</scope>
    <source>
        <strain>SC5314 / ATCC MYA-2876</strain>
    </source>
</reference>
<protein>
    <recommendedName>
        <fullName>UDP-N-acetylglucosamine transferase subunit ALG14</fullName>
    </recommendedName>
    <alternativeName>
        <fullName>Asparagine-linked glycosylation protein 14</fullName>
    </alternativeName>
</protein>
<dbReference type="EMBL" id="CP017624">
    <property type="protein sequence ID" value="AOW28047.1"/>
    <property type="molecule type" value="Genomic_DNA"/>
</dbReference>
<dbReference type="RefSeq" id="XP_717165.1">
    <property type="nucleotide sequence ID" value="XM_712072.1"/>
</dbReference>
<dbReference type="SMR" id="Q5A5N6"/>
<dbReference type="FunCoup" id="Q5A5N6">
    <property type="interactions" value="321"/>
</dbReference>
<dbReference type="STRING" id="237561.Q5A5N6"/>
<dbReference type="EnsemblFungi" id="C2_10790C_A-T">
    <property type="protein sequence ID" value="C2_10790C_A-T-p1"/>
    <property type="gene ID" value="C2_10790C_A"/>
</dbReference>
<dbReference type="GeneID" id="3641242"/>
<dbReference type="KEGG" id="cal:CAALFM_C210790CA"/>
<dbReference type="CGD" id="CAL0000178538">
    <property type="gene designation" value="orf19.12823"/>
</dbReference>
<dbReference type="VEuPathDB" id="FungiDB:C2_10790C_A"/>
<dbReference type="eggNOG" id="KOG3339">
    <property type="taxonomic scope" value="Eukaryota"/>
</dbReference>
<dbReference type="HOGENOM" id="CLU_064541_2_0_1"/>
<dbReference type="InParanoid" id="Q5A5N6"/>
<dbReference type="OMA" id="CRIVFIE"/>
<dbReference type="OrthoDB" id="17098at2759"/>
<dbReference type="PRO" id="PR:Q5A5N6"/>
<dbReference type="Proteomes" id="UP000000559">
    <property type="component" value="Chromosome 2"/>
</dbReference>
<dbReference type="GO" id="GO:0098548">
    <property type="term" value="C:cytoplasmic side of Golgi membrane"/>
    <property type="evidence" value="ECO:0007669"/>
    <property type="project" value="EnsemblFungi"/>
</dbReference>
<dbReference type="GO" id="GO:0005811">
    <property type="term" value="C:lipid droplet"/>
    <property type="evidence" value="ECO:0007669"/>
    <property type="project" value="EnsemblFungi"/>
</dbReference>
<dbReference type="GO" id="GO:0031965">
    <property type="term" value="C:nuclear membrane"/>
    <property type="evidence" value="ECO:0007669"/>
    <property type="project" value="UniProtKB-SubCell"/>
</dbReference>
<dbReference type="GO" id="GO:0043541">
    <property type="term" value="C:UDP-N-acetylglucosamine transferase complex"/>
    <property type="evidence" value="ECO:0000318"/>
    <property type="project" value="GO_Central"/>
</dbReference>
<dbReference type="GO" id="GO:0004577">
    <property type="term" value="F:N-acetylglucosaminyldiphosphodolichol N-acetylglucosaminyltransferase activity"/>
    <property type="evidence" value="ECO:0007669"/>
    <property type="project" value="EnsemblFungi"/>
</dbReference>
<dbReference type="GO" id="GO:0043495">
    <property type="term" value="F:protein-membrane adaptor activity"/>
    <property type="evidence" value="ECO:0007669"/>
    <property type="project" value="EnsemblFungi"/>
</dbReference>
<dbReference type="GO" id="GO:0006488">
    <property type="term" value="P:dolichol-linked oligosaccharide biosynthetic process"/>
    <property type="evidence" value="ECO:0000318"/>
    <property type="project" value="GO_Central"/>
</dbReference>
<dbReference type="Gene3D" id="3.40.50.2000">
    <property type="entry name" value="Glycogen Phosphorylase B"/>
    <property type="match status" value="1"/>
</dbReference>
<dbReference type="InterPro" id="IPR013969">
    <property type="entry name" value="Oligosacch_biosynth_Alg14"/>
</dbReference>
<dbReference type="PANTHER" id="PTHR12154">
    <property type="entry name" value="GLYCOSYL TRANSFERASE-RELATED"/>
    <property type="match status" value="1"/>
</dbReference>
<dbReference type="PANTHER" id="PTHR12154:SF4">
    <property type="entry name" value="UDP-N-ACETYLGLUCOSAMINE TRANSFERASE SUBUNIT ALG14 HOMOLOG"/>
    <property type="match status" value="1"/>
</dbReference>
<dbReference type="Pfam" id="PF08660">
    <property type="entry name" value="Alg14"/>
    <property type="match status" value="1"/>
</dbReference>
<accession>Q5A5N6</accession>
<accession>A0A1D8PIT0</accession>
<evidence type="ECO:0000250" key="1"/>
<evidence type="ECO:0000250" key="2">
    <source>
        <dbReference type="UniProtKB" id="P38242"/>
    </source>
</evidence>
<evidence type="ECO:0000255" key="3"/>
<evidence type="ECO:0000305" key="4"/>